<reference key="1">
    <citation type="submission" date="2008-02" db="EMBL/GenBank/DDBJ databases">
        <title>Complete sequence of Pseudomonas putida W619.</title>
        <authorList>
            <person name="Copeland A."/>
            <person name="Lucas S."/>
            <person name="Lapidus A."/>
            <person name="Barry K."/>
            <person name="Detter J.C."/>
            <person name="Glavina del Rio T."/>
            <person name="Dalin E."/>
            <person name="Tice H."/>
            <person name="Pitluck S."/>
            <person name="Chain P."/>
            <person name="Malfatti S."/>
            <person name="Shin M."/>
            <person name="Vergez L."/>
            <person name="Schmutz J."/>
            <person name="Larimer F."/>
            <person name="Land M."/>
            <person name="Hauser L."/>
            <person name="Kyrpides N."/>
            <person name="Kim E."/>
            <person name="Taghavi S."/>
            <person name="Vangronsveld D."/>
            <person name="van der Lelie D."/>
            <person name="Richardson P."/>
        </authorList>
    </citation>
    <scope>NUCLEOTIDE SEQUENCE [LARGE SCALE GENOMIC DNA]</scope>
    <source>
        <strain>W619</strain>
    </source>
</reference>
<keyword id="KW-0687">Ribonucleoprotein</keyword>
<keyword id="KW-0689">Ribosomal protein</keyword>
<keyword id="KW-0694">RNA-binding</keyword>
<keyword id="KW-0699">rRNA-binding</keyword>
<evidence type="ECO:0000255" key="1">
    <source>
        <dbReference type="HAMAP-Rule" id="MF_00537"/>
    </source>
</evidence>
<evidence type="ECO:0000305" key="2"/>
<name>RS14_PSEPW</name>
<proteinExistence type="inferred from homology"/>
<dbReference type="EMBL" id="CP000949">
    <property type="protein sequence ID" value="ACA75212.1"/>
    <property type="molecule type" value="Genomic_DNA"/>
</dbReference>
<dbReference type="SMR" id="B1JAJ9"/>
<dbReference type="STRING" id="390235.PputW619_4736"/>
<dbReference type="KEGG" id="ppw:PputW619_4736"/>
<dbReference type="eggNOG" id="COG0199">
    <property type="taxonomic scope" value="Bacteria"/>
</dbReference>
<dbReference type="HOGENOM" id="CLU_139869_0_1_6"/>
<dbReference type="OrthoDB" id="9810484at2"/>
<dbReference type="GO" id="GO:0005737">
    <property type="term" value="C:cytoplasm"/>
    <property type="evidence" value="ECO:0007669"/>
    <property type="project" value="UniProtKB-ARBA"/>
</dbReference>
<dbReference type="GO" id="GO:0015935">
    <property type="term" value="C:small ribosomal subunit"/>
    <property type="evidence" value="ECO:0007669"/>
    <property type="project" value="TreeGrafter"/>
</dbReference>
<dbReference type="GO" id="GO:0019843">
    <property type="term" value="F:rRNA binding"/>
    <property type="evidence" value="ECO:0007669"/>
    <property type="project" value="UniProtKB-UniRule"/>
</dbReference>
<dbReference type="GO" id="GO:0003735">
    <property type="term" value="F:structural constituent of ribosome"/>
    <property type="evidence" value="ECO:0007669"/>
    <property type="project" value="InterPro"/>
</dbReference>
<dbReference type="GO" id="GO:0006412">
    <property type="term" value="P:translation"/>
    <property type="evidence" value="ECO:0007669"/>
    <property type="project" value="UniProtKB-UniRule"/>
</dbReference>
<dbReference type="FunFam" id="1.10.287.1480:FF:000001">
    <property type="entry name" value="30S ribosomal protein S14"/>
    <property type="match status" value="1"/>
</dbReference>
<dbReference type="Gene3D" id="1.10.287.1480">
    <property type="match status" value="1"/>
</dbReference>
<dbReference type="HAMAP" id="MF_00537">
    <property type="entry name" value="Ribosomal_uS14_1"/>
    <property type="match status" value="1"/>
</dbReference>
<dbReference type="InterPro" id="IPR001209">
    <property type="entry name" value="Ribosomal_uS14"/>
</dbReference>
<dbReference type="InterPro" id="IPR023036">
    <property type="entry name" value="Ribosomal_uS14_bac/plastid"/>
</dbReference>
<dbReference type="NCBIfam" id="NF006477">
    <property type="entry name" value="PRK08881.1"/>
    <property type="match status" value="1"/>
</dbReference>
<dbReference type="PANTHER" id="PTHR19836">
    <property type="entry name" value="30S RIBOSOMAL PROTEIN S14"/>
    <property type="match status" value="1"/>
</dbReference>
<dbReference type="PANTHER" id="PTHR19836:SF19">
    <property type="entry name" value="SMALL RIBOSOMAL SUBUNIT PROTEIN US14M"/>
    <property type="match status" value="1"/>
</dbReference>
<dbReference type="Pfam" id="PF00253">
    <property type="entry name" value="Ribosomal_S14"/>
    <property type="match status" value="1"/>
</dbReference>
<dbReference type="SUPFAM" id="SSF57716">
    <property type="entry name" value="Glucocorticoid receptor-like (DNA-binding domain)"/>
    <property type="match status" value="1"/>
</dbReference>
<accession>B1JAJ9</accession>
<gene>
    <name evidence="1" type="primary">rpsN</name>
    <name type="ordered locus">PputW619_4736</name>
</gene>
<organism>
    <name type="scientific">Pseudomonas putida (strain W619)</name>
    <dbReference type="NCBI Taxonomy" id="390235"/>
    <lineage>
        <taxon>Bacteria</taxon>
        <taxon>Pseudomonadati</taxon>
        <taxon>Pseudomonadota</taxon>
        <taxon>Gammaproteobacteria</taxon>
        <taxon>Pseudomonadales</taxon>
        <taxon>Pseudomonadaceae</taxon>
        <taxon>Pseudomonas</taxon>
    </lineage>
</organism>
<sequence length="101" mass="11387">MAKKSMKNRELKRQLTVAKFAKKRAELKATIVNLNASPEERFAAVVALQKQPRDASAARLRNRCRLTGRPHGVYRKFGLGRNMLRQAAMRGDVPGLVKASW</sequence>
<feature type="chain" id="PRO_1000128520" description="Small ribosomal subunit protein uS14">
    <location>
        <begin position="1"/>
        <end position="101"/>
    </location>
</feature>
<protein>
    <recommendedName>
        <fullName evidence="1">Small ribosomal subunit protein uS14</fullName>
    </recommendedName>
    <alternativeName>
        <fullName evidence="2">30S ribosomal protein S14</fullName>
    </alternativeName>
</protein>
<comment type="function">
    <text evidence="1">Binds 16S rRNA, required for the assembly of 30S particles and may also be responsible for determining the conformation of the 16S rRNA at the A site.</text>
</comment>
<comment type="subunit">
    <text evidence="1">Part of the 30S ribosomal subunit. Contacts proteins S3 and S10.</text>
</comment>
<comment type="similarity">
    <text evidence="1">Belongs to the universal ribosomal protein uS14 family.</text>
</comment>